<keyword id="KW-0119">Carbohydrate metabolism</keyword>
<keyword id="KW-0320">Glycogen biosynthesis</keyword>
<keyword id="KW-0321">Glycogen metabolism</keyword>
<keyword id="KW-0328">Glycosyltransferase</keyword>
<keyword id="KW-1185">Reference proteome</keyword>
<keyword id="KW-0808">Transferase</keyword>
<feature type="chain" id="PRO_0000188708" description="1,4-alpha-glucan branching enzyme GlgB">
    <location>
        <begin position="1"/>
        <end position="611"/>
    </location>
</feature>
<feature type="active site" description="Nucleophile" evidence="1">
    <location>
        <position position="302"/>
    </location>
</feature>
<feature type="active site" description="Proton donor" evidence="1">
    <location>
        <position position="343"/>
    </location>
</feature>
<sequence length="611" mass="72562">MILMSGQMEQYLFHRGEFRQAYEYFGAHPTRSSTIFRIWAPSAKSVAVVGDFNDWRAREEDYCHKLTNEGIWEVEIKKIKKGNLYKYQIETSWGEKILKSDPYAFYSELRPQTASIVNGKPKFRWADKRWLNNREIGYAKPINIYEVHLGSWKKKEDGTYYNYKEIAELLVEYMLEMNYTHIEIMPIIEYPFDGSWGYQGTGYYSVTSRYGTPDDFMYFVNYFHKNNLGVILDWVPGHFCKDSHGLYRFDGSACYEYEDPSLGENEWGSANFNVSRNEVRSFLLSNLYFWIKEFHIDGIRMDAVSNMLYYKDGLSENKHSVEFLQYLNQSLHEEYPDVMLIAEDSSAWPLVTKYQADGGLGFDFKWNMGWMNDTLKYMEQDPFFRKSHHGKLTFSFMYAFSENFILPLSHDEIVHGKNSILNKMPGYYEDKLAHVKNLYSYQMAHPGKKLNFMGNEFVQGLEWRYYEQLEWQLLKDNKGSQDIQKYVKALNKLYLEEEALWYDGQDGFEWIEHENINENMLIFLRKTPNMEDFIIAVFNFSGKDHEIYPLGVPLEDGEYEVILDSNEKKFGGSYQGRKRKYKSIKKSWNYREQYIEIKIAKNSAVFLKYKK</sequence>
<proteinExistence type="inferred from homology"/>
<accession>Q8RF62</accession>
<evidence type="ECO:0000255" key="1">
    <source>
        <dbReference type="HAMAP-Rule" id="MF_00685"/>
    </source>
</evidence>
<organism>
    <name type="scientific">Fusobacterium nucleatum subsp. nucleatum (strain ATCC 25586 / DSM 15643 / BCRC 10681 / CIP 101130 / JCM 8532 / KCTC 2640 / LMG 13131 / VPI 4355)</name>
    <dbReference type="NCBI Taxonomy" id="190304"/>
    <lineage>
        <taxon>Bacteria</taxon>
        <taxon>Fusobacteriati</taxon>
        <taxon>Fusobacteriota</taxon>
        <taxon>Fusobacteriia</taxon>
        <taxon>Fusobacteriales</taxon>
        <taxon>Fusobacteriaceae</taxon>
        <taxon>Fusobacterium</taxon>
    </lineage>
</organism>
<dbReference type="EC" id="2.4.1.18" evidence="1"/>
<dbReference type="EMBL" id="AE009951">
    <property type="protein sequence ID" value="AAL95052.1"/>
    <property type="molecule type" value="Genomic_DNA"/>
</dbReference>
<dbReference type="RefSeq" id="NP_603753.1">
    <property type="nucleotide sequence ID" value="NC_003454.1"/>
</dbReference>
<dbReference type="SMR" id="Q8RF62"/>
<dbReference type="FunCoup" id="Q8RF62">
    <property type="interactions" value="253"/>
</dbReference>
<dbReference type="STRING" id="190304.FN0856"/>
<dbReference type="CAZy" id="CBM48">
    <property type="family name" value="Carbohydrate-Binding Module Family 48"/>
</dbReference>
<dbReference type="CAZy" id="GH13">
    <property type="family name" value="Glycoside Hydrolase Family 13"/>
</dbReference>
<dbReference type="PaxDb" id="190304-FN0856"/>
<dbReference type="EnsemblBacteria" id="AAL95052">
    <property type="protein sequence ID" value="AAL95052"/>
    <property type="gene ID" value="FN0856"/>
</dbReference>
<dbReference type="KEGG" id="fnu:FN0856"/>
<dbReference type="PATRIC" id="fig|190304.8.peg.1417"/>
<dbReference type="eggNOG" id="COG0296">
    <property type="taxonomic scope" value="Bacteria"/>
</dbReference>
<dbReference type="HOGENOM" id="CLU_004245_4_0_0"/>
<dbReference type="InParanoid" id="Q8RF62"/>
<dbReference type="BioCyc" id="FNUC190304:G1FZS-1439-MONOMER"/>
<dbReference type="UniPathway" id="UPA00164"/>
<dbReference type="Proteomes" id="UP000002521">
    <property type="component" value="Chromosome"/>
</dbReference>
<dbReference type="GO" id="GO:0005737">
    <property type="term" value="C:cytoplasm"/>
    <property type="evidence" value="ECO:0000318"/>
    <property type="project" value="GO_Central"/>
</dbReference>
<dbReference type="GO" id="GO:0005829">
    <property type="term" value="C:cytosol"/>
    <property type="evidence" value="ECO:0000318"/>
    <property type="project" value="GO_Central"/>
</dbReference>
<dbReference type="GO" id="GO:0003844">
    <property type="term" value="F:1,4-alpha-glucan branching enzyme activity"/>
    <property type="evidence" value="ECO:0000318"/>
    <property type="project" value="GO_Central"/>
</dbReference>
<dbReference type="GO" id="GO:0043169">
    <property type="term" value="F:cation binding"/>
    <property type="evidence" value="ECO:0007669"/>
    <property type="project" value="InterPro"/>
</dbReference>
<dbReference type="GO" id="GO:0004553">
    <property type="term" value="F:hydrolase activity, hydrolyzing O-glycosyl compounds"/>
    <property type="evidence" value="ECO:0007669"/>
    <property type="project" value="InterPro"/>
</dbReference>
<dbReference type="GO" id="GO:0005978">
    <property type="term" value="P:glycogen biosynthetic process"/>
    <property type="evidence" value="ECO:0000318"/>
    <property type="project" value="GO_Central"/>
</dbReference>
<dbReference type="CDD" id="cd11322">
    <property type="entry name" value="AmyAc_Glg_BE"/>
    <property type="match status" value="1"/>
</dbReference>
<dbReference type="CDD" id="cd02855">
    <property type="entry name" value="E_set_GBE_prok_N"/>
    <property type="match status" value="1"/>
</dbReference>
<dbReference type="Gene3D" id="3.20.20.80">
    <property type="entry name" value="Glycosidases"/>
    <property type="match status" value="1"/>
</dbReference>
<dbReference type="Gene3D" id="2.60.40.1180">
    <property type="entry name" value="Golgi alpha-mannosidase II"/>
    <property type="match status" value="1"/>
</dbReference>
<dbReference type="Gene3D" id="2.60.40.10">
    <property type="entry name" value="Immunoglobulins"/>
    <property type="match status" value="1"/>
</dbReference>
<dbReference type="HAMAP" id="MF_00685">
    <property type="entry name" value="GlgB"/>
    <property type="match status" value="1"/>
</dbReference>
<dbReference type="InterPro" id="IPR006048">
    <property type="entry name" value="A-amylase/branching_C"/>
</dbReference>
<dbReference type="InterPro" id="IPR037439">
    <property type="entry name" value="Branching_enzy"/>
</dbReference>
<dbReference type="InterPro" id="IPR006407">
    <property type="entry name" value="GlgB"/>
</dbReference>
<dbReference type="InterPro" id="IPR044143">
    <property type="entry name" value="GlgB_N_E_set_prok"/>
</dbReference>
<dbReference type="InterPro" id="IPR006047">
    <property type="entry name" value="Glyco_hydro_13_cat_dom"/>
</dbReference>
<dbReference type="InterPro" id="IPR004193">
    <property type="entry name" value="Glyco_hydro_13_N"/>
</dbReference>
<dbReference type="InterPro" id="IPR013780">
    <property type="entry name" value="Glyco_hydro_b"/>
</dbReference>
<dbReference type="InterPro" id="IPR017853">
    <property type="entry name" value="Glycoside_hydrolase_SF"/>
</dbReference>
<dbReference type="InterPro" id="IPR013783">
    <property type="entry name" value="Ig-like_fold"/>
</dbReference>
<dbReference type="InterPro" id="IPR014756">
    <property type="entry name" value="Ig_E-set"/>
</dbReference>
<dbReference type="NCBIfam" id="TIGR01515">
    <property type="entry name" value="branching_enzym"/>
    <property type="match status" value="1"/>
</dbReference>
<dbReference type="NCBIfam" id="NF003811">
    <property type="entry name" value="PRK05402.1"/>
    <property type="match status" value="1"/>
</dbReference>
<dbReference type="NCBIfam" id="NF008967">
    <property type="entry name" value="PRK12313.1"/>
    <property type="match status" value="1"/>
</dbReference>
<dbReference type="PANTHER" id="PTHR43651">
    <property type="entry name" value="1,4-ALPHA-GLUCAN-BRANCHING ENZYME"/>
    <property type="match status" value="1"/>
</dbReference>
<dbReference type="PANTHER" id="PTHR43651:SF3">
    <property type="entry name" value="1,4-ALPHA-GLUCAN-BRANCHING ENZYME"/>
    <property type="match status" value="1"/>
</dbReference>
<dbReference type="Pfam" id="PF00128">
    <property type="entry name" value="Alpha-amylase"/>
    <property type="match status" value="2"/>
</dbReference>
<dbReference type="Pfam" id="PF02806">
    <property type="entry name" value="Alpha-amylase_C"/>
    <property type="match status" value="1"/>
</dbReference>
<dbReference type="Pfam" id="PF02922">
    <property type="entry name" value="CBM_48"/>
    <property type="match status" value="1"/>
</dbReference>
<dbReference type="PIRSF" id="PIRSF000463">
    <property type="entry name" value="GlgB"/>
    <property type="match status" value="1"/>
</dbReference>
<dbReference type="SMART" id="SM00642">
    <property type="entry name" value="Aamy"/>
    <property type="match status" value="1"/>
</dbReference>
<dbReference type="SUPFAM" id="SSF51445">
    <property type="entry name" value="(Trans)glycosidases"/>
    <property type="match status" value="1"/>
</dbReference>
<dbReference type="SUPFAM" id="SSF81296">
    <property type="entry name" value="E set domains"/>
    <property type="match status" value="1"/>
</dbReference>
<dbReference type="SUPFAM" id="SSF51011">
    <property type="entry name" value="Glycosyl hydrolase domain"/>
    <property type="match status" value="1"/>
</dbReference>
<protein>
    <recommendedName>
        <fullName evidence="1">1,4-alpha-glucan branching enzyme GlgB</fullName>
        <ecNumber evidence="1">2.4.1.18</ecNumber>
    </recommendedName>
    <alternativeName>
        <fullName evidence="1">1,4-alpha-D-glucan:1,4-alpha-D-glucan 6-glucosyl-transferase</fullName>
    </alternativeName>
    <alternativeName>
        <fullName evidence="1">Alpha-(1-&gt;4)-glucan branching enzyme</fullName>
    </alternativeName>
    <alternativeName>
        <fullName evidence="1">Glycogen branching enzyme</fullName>
        <shortName evidence="1">BE</shortName>
    </alternativeName>
</protein>
<reference key="1">
    <citation type="journal article" date="2002" name="J. Bacteriol.">
        <title>Genome sequence and analysis of the oral bacterium Fusobacterium nucleatum strain ATCC 25586.</title>
        <authorList>
            <person name="Kapatral V."/>
            <person name="Anderson I."/>
            <person name="Ivanova N."/>
            <person name="Reznik G."/>
            <person name="Los T."/>
            <person name="Lykidis A."/>
            <person name="Bhattacharyya A."/>
            <person name="Bartman A."/>
            <person name="Gardner W."/>
            <person name="Grechkin G."/>
            <person name="Zhu L."/>
            <person name="Vasieva O."/>
            <person name="Chu L."/>
            <person name="Kogan Y."/>
            <person name="Chaga O."/>
            <person name="Goltsman E."/>
            <person name="Bernal A."/>
            <person name="Larsen N."/>
            <person name="D'Souza M."/>
            <person name="Walunas T."/>
            <person name="Pusch G."/>
            <person name="Haselkorn R."/>
            <person name="Fonstein M."/>
            <person name="Kyrpides N.C."/>
            <person name="Overbeek R."/>
        </authorList>
    </citation>
    <scope>NUCLEOTIDE SEQUENCE [LARGE SCALE GENOMIC DNA]</scope>
    <source>
        <strain>ATCC 25586 / DSM 15643 / BCRC 10681 / CIP 101130 / JCM 8532 / KCTC 2640 / LMG 13131 / VPI 4355</strain>
    </source>
</reference>
<comment type="function">
    <text evidence="1">Catalyzes the formation of the alpha-1,6-glucosidic linkages in glycogen by scission of a 1,4-alpha-linked oligosaccharide from growing alpha-1,4-glucan chains and the subsequent attachment of the oligosaccharide to the alpha-1,6 position.</text>
</comment>
<comment type="catalytic activity">
    <reaction evidence="1">
        <text>Transfers a segment of a (1-&gt;4)-alpha-D-glucan chain to a primary hydroxy group in a similar glucan chain.</text>
        <dbReference type="EC" id="2.4.1.18"/>
    </reaction>
</comment>
<comment type="pathway">
    <text evidence="1">Glycan biosynthesis; glycogen biosynthesis.</text>
</comment>
<comment type="subunit">
    <text evidence="1">Monomer.</text>
</comment>
<comment type="similarity">
    <text evidence="1">Belongs to the glycosyl hydrolase 13 family. GlgB subfamily.</text>
</comment>
<name>GLGB_FUSNN</name>
<gene>
    <name evidence="1" type="primary">glgB</name>
    <name type="ordered locus">FN0856</name>
</gene>